<keyword id="KW-0479">Metal-binding</keyword>
<keyword id="KW-0521">NADP</keyword>
<keyword id="KW-0560">Oxidoreductase</keyword>
<keyword id="KW-0630">Potassium</keyword>
<proteinExistence type="inferred from homology"/>
<dbReference type="EC" id="1.7.1.7" evidence="1"/>
<dbReference type="EMBL" id="CP000653">
    <property type="protein sequence ID" value="ABP59336.1"/>
    <property type="molecule type" value="Genomic_DNA"/>
</dbReference>
<dbReference type="RefSeq" id="WP_012016057.1">
    <property type="nucleotide sequence ID" value="NC_009436.1"/>
</dbReference>
<dbReference type="SMR" id="A4W6K6"/>
<dbReference type="STRING" id="399742.Ent638_0649"/>
<dbReference type="KEGG" id="ent:Ent638_0649"/>
<dbReference type="eggNOG" id="COG0516">
    <property type="taxonomic scope" value="Bacteria"/>
</dbReference>
<dbReference type="HOGENOM" id="CLU_022552_5_3_6"/>
<dbReference type="OrthoDB" id="9805398at2"/>
<dbReference type="Proteomes" id="UP000000230">
    <property type="component" value="Chromosome"/>
</dbReference>
<dbReference type="GO" id="GO:0005829">
    <property type="term" value="C:cytosol"/>
    <property type="evidence" value="ECO:0007669"/>
    <property type="project" value="TreeGrafter"/>
</dbReference>
<dbReference type="GO" id="GO:1902560">
    <property type="term" value="C:GMP reductase complex"/>
    <property type="evidence" value="ECO:0007669"/>
    <property type="project" value="InterPro"/>
</dbReference>
<dbReference type="GO" id="GO:0003920">
    <property type="term" value="F:GMP reductase activity"/>
    <property type="evidence" value="ECO:0007669"/>
    <property type="project" value="UniProtKB-UniRule"/>
</dbReference>
<dbReference type="GO" id="GO:0046872">
    <property type="term" value="F:metal ion binding"/>
    <property type="evidence" value="ECO:0007669"/>
    <property type="project" value="UniProtKB-KW"/>
</dbReference>
<dbReference type="GO" id="GO:0006163">
    <property type="term" value="P:purine nucleotide metabolic process"/>
    <property type="evidence" value="ECO:0007669"/>
    <property type="project" value="UniProtKB-UniRule"/>
</dbReference>
<dbReference type="CDD" id="cd00381">
    <property type="entry name" value="IMPDH"/>
    <property type="match status" value="1"/>
</dbReference>
<dbReference type="FunFam" id="3.20.20.70:FF:000012">
    <property type="entry name" value="GMP reductase"/>
    <property type="match status" value="1"/>
</dbReference>
<dbReference type="Gene3D" id="3.20.20.70">
    <property type="entry name" value="Aldolase class I"/>
    <property type="match status" value="1"/>
</dbReference>
<dbReference type="HAMAP" id="MF_00596">
    <property type="entry name" value="GMP_reduct_type1"/>
    <property type="match status" value="1"/>
</dbReference>
<dbReference type="InterPro" id="IPR013785">
    <property type="entry name" value="Aldolase_TIM"/>
</dbReference>
<dbReference type="InterPro" id="IPR050139">
    <property type="entry name" value="GMP_reductase"/>
</dbReference>
<dbReference type="InterPro" id="IPR005993">
    <property type="entry name" value="GMPR"/>
</dbReference>
<dbReference type="InterPro" id="IPR015875">
    <property type="entry name" value="IMP_DH/GMP_Rdtase_CS"/>
</dbReference>
<dbReference type="InterPro" id="IPR001093">
    <property type="entry name" value="IMP_DH_GMPRt"/>
</dbReference>
<dbReference type="NCBIfam" id="TIGR01305">
    <property type="entry name" value="GMP_reduct_1"/>
    <property type="match status" value="1"/>
</dbReference>
<dbReference type="NCBIfam" id="NF003470">
    <property type="entry name" value="PRK05096.1"/>
    <property type="match status" value="1"/>
</dbReference>
<dbReference type="PANTHER" id="PTHR43170">
    <property type="entry name" value="GMP REDUCTASE"/>
    <property type="match status" value="1"/>
</dbReference>
<dbReference type="PANTHER" id="PTHR43170:SF5">
    <property type="entry name" value="GMP REDUCTASE"/>
    <property type="match status" value="1"/>
</dbReference>
<dbReference type="Pfam" id="PF00478">
    <property type="entry name" value="IMPDH"/>
    <property type="match status" value="1"/>
</dbReference>
<dbReference type="PIRSF" id="PIRSF000235">
    <property type="entry name" value="GMP_reductase"/>
    <property type="match status" value="1"/>
</dbReference>
<dbReference type="SMART" id="SM01240">
    <property type="entry name" value="IMPDH"/>
    <property type="match status" value="1"/>
</dbReference>
<dbReference type="SUPFAM" id="SSF51412">
    <property type="entry name" value="Inosine monophosphate dehydrogenase (IMPDH)"/>
    <property type="match status" value="1"/>
</dbReference>
<dbReference type="PROSITE" id="PS00487">
    <property type="entry name" value="IMP_DH_GMP_RED"/>
    <property type="match status" value="1"/>
</dbReference>
<comment type="function">
    <text evidence="1">Catalyzes the irreversible NADPH-dependent deamination of GMP to IMP. It functions in the conversion of nucleobase, nucleoside and nucleotide derivatives of G to A nucleotides, and in maintaining the intracellular balance of A and G nucleotides.</text>
</comment>
<comment type="catalytic activity">
    <reaction evidence="1">
        <text>IMP + NH4(+) + NADP(+) = GMP + NADPH + 2 H(+)</text>
        <dbReference type="Rhea" id="RHEA:17185"/>
        <dbReference type="ChEBI" id="CHEBI:15378"/>
        <dbReference type="ChEBI" id="CHEBI:28938"/>
        <dbReference type="ChEBI" id="CHEBI:57783"/>
        <dbReference type="ChEBI" id="CHEBI:58053"/>
        <dbReference type="ChEBI" id="CHEBI:58115"/>
        <dbReference type="ChEBI" id="CHEBI:58349"/>
        <dbReference type="EC" id="1.7.1.7"/>
    </reaction>
</comment>
<comment type="subunit">
    <text evidence="1">Homotetramer.</text>
</comment>
<comment type="similarity">
    <text evidence="1">Belongs to the IMPDH/GMPR family. GuaC type 1 subfamily.</text>
</comment>
<reference key="1">
    <citation type="journal article" date="2010" name="PLoS Genet.">
        <title>Genome sequence of the plant growth promoting endophytic bacterium Enterobacter sp. 638.</title>
        <authorList>
            <person name="Taghavi S."/>
            <person name="van der Lelie D."/>
            <person name="Hoffman A."/>
            <person name="Zhang Y.B."/>
            <person name="Walla M.D."/>
            <person name="Vangronsveld J."/>
            <person name="Newman L."/>
            <person name="Monchy S."/>
        </authorList>
    </citation>
    <scope>NUCLEOTIDE SEQUENCE [LARGE SCALE GENOMIC DNA]</scope>
    <source>
        <strain>638</strain>
    </source>
</reference>
<gene>
    <name evidence="1" type="primary">guaC</name>
    <name type="ordered locus">Ent638_0649</name>
</gene>
<name>GUAC_ENT38</name>
<sequence length="347" mass="37211">MRIEEDLKLGFKDVLIRPKRSTLKSRSDVELERQFTFKHSGQTWSGVPIIAANMDTVGTFAMATALASFDILTAVHKHYSVEEWNAFAASASADVLKHVMVSTGTSDTDFEKTKQILIANPALNFLCIDVANGYSEHFVQFVSKAREAWPDKTIIAGNVVTGEMCEELILAGADIVKVGIGPGSVCTTRVKTGVGYPQLSAVIECADAAHGLGGQIISDGGCTMPGDVAKAFGGGADFVMLGGMLAGHEESGGTVVEENGEKFMLFYGMSSESAMNRHVGGVAQYRAAEGKTVKLPLRGPVENTARDVMGGLRSACTYVGASRLKELTKRTTFIRVQEQENRIFNSL</sequence>
<evidence type="ECO:0000255" key="1">
    <source>
        <dbReference type="HAMAP-Rule" id="MF_00596"/>
    </source>
</evidence>
<protein>
    <recommendedName>
        <fullName evidence="1">GMP reductase</fullName>
        <ecNumber evidence="1">1.7.1.7</ecNumber>
    </recommendedName>
    <alternativeName>
        <fullName evidence="1">Guanosine 5'-monophosphate oxidoreductase</fullName>
        <shortName evidence="1">Guanosine monophosphate reductase</shortName>
    </alternativeName>
</protein>
<accession>A4W6K6</accession>
<organism>
    <name type="scientific">Enterobacter sp. (strain 638)</name>
    <dbReference type="NCBI Taxonomy" id="399742"/>
    <lineage>
        <taxon>Bacteria</taxon>
        <taxon>Pseudomonadati</taxon>
        <taxon>Pseudomonadota</taxon>
        <taxon>Gammaproteobacteria</taxon>
        <taxon>Enterobacterales</taxon>
        <taxon>Enterobacteriaceae</taxon>
        <taxon>Enterobacter</taxon>
    </lineage>
</organism>
<feature type="chain" id="PRO_1000061237" description="GMP reductase">
    <location>
        <begin position="1"/>
        <end position="347"/>
    </location>
</feature>
<feature type="active site" description="Thioimidate intermediate" evidence="1">
    <location>
        <position position="186"/>
    </location>
</feature>
<feature type="binding site" evidence="1">
    <location>
        <begin position="108"/>
        <end position="131"/>
    </location>
    <ligand>
        <name>NADP(+)</name>
        <dbReference type="ChEBI" id="CHEBI:58349"/>
    </ligand>
</feature>
<feature type="binding site" evidence="1">
    <location>
        <position position="181"/>
    </location>
    <ligand>
        <name>K(+)</name>
        <dbReference type="ChEBI" id="CHEBI:29103"/>
    </ligand>
</feature>
<feature type="binding site" evidence="1">
    <location>
        <position position="183"/>
    </location>
    <ligand>
        <name>K(+)</name>
        <dbReference type="ChEBI" id="CHEBI:29103"/>
    </ligand>
</feature>
<feature type="binding site" evidence="1">
    <location>
        <begin position="216"/>
        <end position="239"/>
    </location>
    <ligand>
        <name>NADP(+)</name>
        <dbReference type="ChEBI" id="CHEBI:58349"/>
    </ligand>
</feature>